<accession>A0A494C086</accession>
<gene>
    <name evidence="3" type="primary">SPDYE21</name>
</gene>
<protein>
    <recommendedName>
        <fullName evidence="2">Speedy protein E21</fullName>
    </recommendedName>
</protein>
<reference key="1">
    <citation type="journal article" date="2003" name="Nature">
        <title>The DNA sequence of human chromosome 7.</title>
        <authorList>
            <person name="Hillier L.W."/>
            <person name="Fulton R.S."/>
            <person name="Fulton L.A."/>
            <person name="Graves T.A."/>
            <person name="Pepin K.H."/>
            <person name="Wagner-McPherson C."/>
            <person name="Layman D."/>
            <person name="Maas J."/>
            <person name="Jaeger S."/>
            <person name="Walker R."/>
            <person name="Wylie K."/>
            <person name="Sekhon M."/>
            <person name="Becker M.C."/>
            <person name="O'Laughlin M.D."/>
            <person name="Schaller M.E."/>
            <person name="Fewell G.A."/>
            <person name="Delehaunty K.D."/>
            <person name="Miner T.L."/>
            <person name="Nash W.E."/>
            <person name="Cordes M."/>
            <person name="Du H."/>
            <person name="Sun H."/>
            <person name="Edwards J."/>
            <person name="Bradshaw-Cordum H."/>
            <person name="Ali J."/>
            <person name="Andrews S."/>
            <person name="Isak A."/>
            <person name="Vanbrunt A."/>
            <person name="Nguyen C."/>
            <person name="Du F."/>
            <person name="Lamar B."/>
            <person name="Courtney L."/>
            <person name="Kalicki J."/>
            <person name="Ozersky P."/>
            <person name="Bielicki L."/>
            <person name="Scott K."/>
            <person name="Holmes A."/>
            <person name="Harkins R."/>
            <person name="Harris A."/>
            <person name="Strong C.M."/>
            <person name="Hou S."/>
            <person name="Tomlinson C."/>
            <person name="Dauphin-Kohlberg S."/>
            <person name="Kozlowicz-Reilly A."/>
            <person name="Leonard S."/>
            <person name="Rohlfing T."/>
            <person name="Rock S.M."/>
            <person name="Tin-Wollam A.-M."/>
            <person name="Abbott A."/>
            <person name="Minx P."/>
            <person name="Maupin R."/>
            <person name="Strowmatt C."/>
            <person name="Latreille P."/>
            <person name="Miller N."/>
            <person name="Johnson D."/>
            <person name="Murray J."/>
            <person name="Woessner J.P."/>
            <person name="Wendl M.C."/>
            <person name="Yang S.-P."/>
            <person name="Schultz B.R."/>
            <person name="Wallis J.W."/>
            <person name="Spieth J."/>
            <person name="Bieri T.A."/>
            <person name="Nelson J.O."/>
            <person name="Berkowicz N."/>
            <person name="Wohldmann P.E."/>
            <person name="Cook L.L."/>
            <person name="Hickenbotham M.T."/>
            <person name="Eldred J."/>
            <person name="Williams D."/>
            <person name="Bedell J.A."/>
            <person name="Mardis E.R."/>
            <person name="Clifton S.W."/>
            <person name="Chissoe S.L."/>
            <person name="Marra M.A."/>
            <person name="Raymond C."/>
            <person name="Haugen E."/>
            <person name="Gillett W."/>
            <person name="Zhou Y."/>
            <person name="James R."/>
            <person name="Phelps K."/>
            <person name="Iadanoto S."/>
            <person name="Bubb K."/>
            <person name="Simms E."/>
            <person name="Levy R."/>
            <person name="Clendenning J."/>
            <person name="Kaul R."/>
            <person name="Kent W.J."/>
            <person name="Furey T.S."/>
            <person name="Baertsch R.A."/>
            <person name="Brent M.R."/>
            <person name="Keibler E."/>
            <person name="Flicek P."/>
            <person name="Bork P."/>
            <person name="Suyama M."/>
            <person name="Bailey J.A."/>
            <person name="Portnoy M.E."/>
            <person name="Torrents D."/>
            <person name="Chinwalla A.T."/>
            <person name="Gish W.R."/>
            <person name="Eddy S.R."/>
            <person name="McPherson J.D."/>
            <person name="Olson M.V."/>
            <person name="Eichler E.E."/>
            <person name="Green E.D."/>
            <person name="Waterston R.H."/>
            <person name="Wilson R.K."/>
        </authorList>
    </citation>
    <scope>NUCLEOTIDE SEQUENCE [LARGE SCALE GENOMIC DNA]</scope>
</reference>
<feature type="chain" id="PRO_0000451616" description="Speedy protein E21">
    <location>
        <begin position="1"/>
        <end position="402"/>
    </location>
</feature>
<feature type="region of interest" description="Disordered" evidence="1">
    <location>
        <begin position="1"/>
        <end position="90"/>
    </location>
</feature>
<feature type="compositionally biased region" description="Polar residues" evidence="1">
    <location>
        <begin position="16"/>
        <end position="39"/>
    </location>
</feature>
<feature type="compositionally biased region" description="Acidic residues" evidence="1">
    <location>
        <begin position="76"/>
        <end position="90"/>
    </location>
</feature>
<name>SPD21_HUMAN</name>
<organism>
    <name type="scientific">Homo sapiens</name>
    <name type="common">Human</name>
    <dbReference type="NCBI Taxonomy" id="9606"/>
    <lineage>
        <taxon>Eukaryota</taxon>
        <taxon>Metazoa</taxon>
        <taxon>Chordata</taxon>
        <taxon>Craniata</taxon>
        <taxon>Vertebrata</taxon>
        <taxon>Euteleostomi</taxon>
        <taxon>Mammalia</taxon>
        <taxon>Eutheria</taxon>
        <taxon>Euarchontoglires</taxon>
        <taxon>Primates</taxon>
        <taxon>Haplorrhini</taxon>
        <taxon>Catarrhini</taxon>
        <taxon>Hominidae</taxon>
        <taxon>Homo</taxon>
    </lineage>
</organism>
<comment type="similarity">
    <text evidence="2">Belongs to the Speedy/Ringo family.</text>
</comment>
<evidence type="ECO:0000256" key="1">
    <source>
        <dbReference type="SAM" id="MobiDB-lite"/>
    </source>
</evidence>
<evidence type="ECO:0000305" key="2"/>
<evidence type="ECO:0000312" key="3">
    <source>
        <dbReference type="HGNC" id="HGNC:51517"/>
    </source>
</evidence>
<sequence length="402" mass="48117">MDRTETRFRKRGQITGKITTSRQLHPQNEQSPQRSTSGYPLQEVVDDEVLGPSAPGVDPSPPCRSLGWKRKKEWSDESEEEPEKELAPEPEETWVVETLCGLKMKLKQQRVSPILPEHHKDFNSQLAPGVDPSPPHRSFCWKRKREWWDESEESLEEEPRKVLAPEPEEIWVAEMLCGLKMKLKRRRVLLVLPEHHEAFNRLLEDPVIKRFLAWDKDLRVSDKYLLAMVIVYFSRAGLPSWQYQRIHFFLALYLANDMEEDDEDSKQNIFHFLYGKTRSRIPLLRKRWFQLGRSMNPRARKNRSRIPLLRKRRFQLGRSMNPRARKYRSRIPLVRKRRFQLRRCMNPRARKNRSQIVLFQKLRFQFFCSMSGRAWVSPEELEEIQAYDPEHWVWARDRAHLS</sequence>
<keyword id="KW-1185">Reference proteome</keyword>
<proteinExistence type="inferred from homology"/>
<dbReference type="EMBL" id="AC006480">
    <property type="status" value="NOT_ANNOTATED_CDS"/>
    <property type="molecule type" value="Genomic_DNA"/>
</dbReference>
<dbReference type="CCDS" id="CCDS94109.1"/>
<dbReference type="RefSeq" id="NP_001369644.1">
    <property type="nucleotide sequence ID" value="NM_001382715.2"/>
</dbReference>
<dbReference type="SMR" id="A0A494C086"/>
<dbReference type="MassIVE" id="A0A494C086"/>
<dbReference type="PeptideAtlas" id="A0A494C086"/>
<dbReference type="Ensembl" id="ENST00000424157.4">
    <property type="protein sequence ID" value="ENSP00000498431.1"/>
    <property type="gene ID" value="ENSG00000230358.6"/>
</dbReference>
<dbReference type="GeneID" id="442572"/>
<dbReference type="MANE-Select" id="ENST00000424157.4">
    <property type="protein sequence ID" value="ENSP00000498431.1"/>
    <property type="RefSeq nucleotide sequence ID" value="NM_001382715.2"/>
    <property type="RefSeq protein sequence ID" value="NP_001369644.1"/>
</dbReference>
<dbReference type="AGR" id="HGNC:51517"/>
<dbReference type="GeneCards" id="SPDYE21"/>
<dbReference type="HGNC" id="HGNC:51517">
    <property type="gene designation" value="SPDYE21"/>
</dbReference>
<dbReference type="HPA" id="ENSG00000230358">
    <property type="expression patterns" value="Not detected"/>
</dbReference>
<dbReference type="neXtProt" id="NX_A0A494C086"/>
<dbReference type="VEuPathDB" id="HostDB:ENSG00000230358"/>
<dbReference type="GeneTree" id="ENSGT00940000154173"/>
<dbReference type="InParanoid" id="A0A494C086"/>
<dbReference type="OMA" id="VEHWVWA"/>
<dbReference type="OrthoDB" id="83849at9443"/>
<dbReference type="ChiTaRS" id="SPDYE21P">
    <property type="organism name" value="human"/>
</dbReference>
<dbReference type="Proteomes" id="UP000005640">
    <property type="component" value="Chromosome 7"/>
</dbReference>
<dbReference type="Bgee" id="ENSG00000230358">
    <property type="expression patterns" value="Expressed in male germ line stem cell (sensu Vertebrata) in testis and 90 other cell types or tissues"/>
</dbReference>
<dbReference type="GO" id="GO:0019901">
    <property type="term" value="F:protein kinase binding"/>
    <property type="evidence" value="ECO:0000318"/>
    <property type="project" value="GO_Central"/>
</dbReference>
<dbReference type="InterPro" id="IPR020984">
    <property type="entry name" value="Speedy"/>
</dbReference>
<dbReference type="PANTHER" id="PTHR31156">
    <property type="entry name" value="WBSCR19-LIKE PROTEIN"/>
    <property type="match status" value="1"/>
</dbReference>
<dbReference type="Pfam" id="PF11357">
    <property type="entry name" value="Spy1"/>
    <property type="match status" value="2"/>
</dbReference>